<proteinExistence type="inferred from homology"/>
<accession>Q82XY7</accession>
<name>ILVD_NITEU</name>
<keyword id="KW-0001">2Fe-2S</keyword>
<keyword id="KW-0028">Amino-acid biosynthesis</keyword>
<keyword id="KW-0100">Branched-chain amino acid biosynthesis</keyword>
<keyword id="KW-0408">Iron</keyword>
<keyword id="KW-0411">Iron-sulfur</keyword>
<keyword id="KW-0456">Lyase</keyword>
<keyword id="KW-0460">Magnesium</keyword>
<keyword id="KW-0479">Metal-binding</keyword>
<keyword id="KW-1185">Reference proteome</keyword>
<evidence type="ECO:0000255" key="1">
    <source>
        <dbReference type="HAMAP-Rule" id="MF_00012"/>
    </source>
</evidence>
<organism>
    <name type="scientific">Nitrosomonas europaea (strain ATCC 19718 / CIP 103999 / KCTC 2705 / NBRC 14298)</name>
    <dbReference type="NCBI Taxonomy" id="228410"/>
    <lineage>
        <taxon>Bacteria</taxon>
        <taxon>Pseudomonadati</taxon>
        <taxon>Pseudomonadota</taxon>
        <taxon>Betaproteobacteria</taxon>
        <taxon>Nitrosomonadales</taxon>
        <taxon>Nitrosomonadaceae</taxon>
        <taxon>Nitrosomonas</taxon>
    </lineage>
</organism>
<comment type="function">
    <text evidence="1">Functions in the biosynthesis of branched-chain amino acids. Catalyzes the dehydration of (2R,3R)-2,3-dihydroxy-3-methylpentanoate (2,3-dihydroxy-3-methylvalerate) into 2-oxo-3-methylpentanoate (2-oxo-3-methylvalerate) and of (2R)-2,3-dihydroxy-3-methylbutanoate (2,3-dihydroxyisovalerate) into 2-oxo-3-methylbutanoate (2-oxoisovalerate), the penultimate precursor to L-isoleucine and L-valine, respectively.</text>
</comment>
<comment type="catalytic activity">
    <reaction evidence="1">
        <text>(2R)-2,3-dihydroxy-3-methylbutanoate = 3-methyl-2-oxobutanoate + H2O</text>
        <dbReference type="Rhea" id="RHEA:24809"/>
        <dbReference type="ChEBI" id="CHEBI:11851"/>
        <dbReference type="ChEBI" id="CHEBI:15377"/>
        <dbReference type="ChEBI" id="CHEBI:49072"/>
        <dbReference type="EC" id="4.2.1.9"/>
    </reaction>
    <physiologicalReaction direction="left-to-right" evidence="1">
        <dbReference type="Rhea" id="RHEA:24810"/>
    </physiologicalReaction>
</comment>
<comment type="catalytic activity">
    <reaction evidence="1">
        <text>(2R,3R)-2,3-dihydroxy-3-methylpentanoate = (S)-3-methyl-2-oxopentanoate + H2O</text>
        <dbReference type="Rhea" id="RHEA:27694"/>
        <dbReference type="ChEBI" id="CHEBI:15377"/>
        <dbReference type="ChEBI" id="CHEBI:35146"/>
        <dbReference type="ChEBI" id="CHEBI:49258"/>
        <dbReference type="EC" id="4.2.1.9"/>
    </reaction>
    <physiologicalReaction direction="left-to-right" evidence="1">
        <dbReference type="Rhea" id="RHEA:27695"/>
    </physiologicalReaction>
</comment>
<comment type="cofactor">
    <cofactor evidence="1">
        <name>[2Fe-2S] cluster</name>
        <dbReference type="ChEBI" id="CHEBI:190135"/>
    </cofactor>
    <text evidence="1">Binds 1 [2Fe-2S] cluster per subunit. This cluster acts as a Lewis acid cofactor.</text>
</comment>
<comment type="cofactor">
    <cofactor evidence="1">
        <name>Mg(2+)</name>
        <dbReference type="ChEBI" id="CHEBI:18420"/>
    </cofactor>
</comment>
<comment type="pathway">
    <text evidence="1">Amino-acid biosynthesis; L-isoleucine biosynthesis; L-isoleucine from 2-oxobutanoate: step 3/4.</text>
</comment>
<comment type="pathway">
    <text evidence="1">Amino-acid biosynthesis; L-valine biosynthesis; L-valine from pyruvate: step 3/4.</text>
</comment>
<comment type="subunit">
    <text evidence="1">Homodimer.</text>
</comment>
<comment type="similarity">
    <text evidence="1">Belongs to the IlvD/Edd family.</text>
</comment>
<gene>
    <name evidence="1" type="primary">ilvD</name>
    <name type="ordered locus">NE0104</name>
</gene>
<reference key="1">
    <citation type="journal article" date="2003" name="J. Bacteriol.">
        <title>Complete genome sequence of the ammonia-oxidizing bacterium and obligate chemolithoautotroph Nitrosomonas europaea.</title>
        <authorList>
            <person name="Chain P."/>
            <person name="Lamerdin J.E."/>
            <person name="Larimer F.W."/>
            <person name="Regala W."/>
            <person name="Lao V."/>
            <person name="Land M.L."/>
            <person name="Hauser L."/>
            <person name="Hooper A.B."/>
            <person name="Klotz M.G."/>
            <person name="Norton J."/>
            <person name="Sayavedra-Soto L.A."/>
            <person name="Arciero D.M."/>
            <person name="Hommes N.G."/>
            <person name="Whittaker M.M."/>
            <person name="Arp D.J."/>
        </authorList>
    </citation>
    <scope>NUCLEOTIDE SEQUENCE [LARGE SCALE GENOMIC DNA]</scope>
    <source>
        <strain>ATCC 19718 / CIP 103999 / KCTC 2705 / NBRC 14298</strain>
    </source>
</reference>
<protein>
    <recommendedName>
        <fullName evidence="1">Dihydroxy-acid dehydratase</fullName>
        <shortName evidence="1">DAD</shortName>
        <ecNumber evidence="1">4.2.1.9</ecNumber>
    </recommendedName>
</protein>
<sequence>MPDNRRSQTITQGAQRTPNRAMLRAVGFGDGDFDKPIVGVANGFSTITPCNMGLDTLAKCAEHALKTAGAMPQMFGTITVSDGISMGTEGMKYSLVSREVIADSIETCVQAESMDGVIAIGGCDKNMPGAMIALARLNVPSIFVYGGTIKPGHYQGRDLTIVSAFEAVGQHTAHKIDDHELLEVERHACPGAGSCGGMYTANTMSSAIEAMGMSLPYSSTMAAEDEEKRISAIRSAEVLVDAVKKQILPRSLITRKSIENAVSVVMAVGGSTNAVLHLLAIAHAAEVEFSIDDFEAIRARVPVLCDLKPSGRYVATDLHKAGGIPQVMKMLLVHDLLHGDCLTISGQTIAEVLKDIPEQPRADQDVIQPWDNPVYEQGHLAILKGNLSSEGAVAKISGIKNPSITGPARVFDSEETCMAAILERKIQPGDVVVIRYEGPQGGPGMREMLSPTSALIGEGLGDSVGLITDGRFSGGTYGMVVGHVAPEAFAGGTIALVQEGDSITIDAHRRLLQLNVPEAELERRRAAWHPPAPRYTRGVLAKYAKLVSTASRGAVTD</sequence>
<dbReference type="EC" id="4.2.1.9" evidence="1"/>
<dbReference type="EMBL" id="AL954747">
    <property type="protein sequence ID" value="CAD84015.1"/>
    <property type="molecule type" value="Genomic_DNA"/>
</dbReference>
<dbReference type="RefSeq" id="WP_011110756.1">
    <property type="nucleotide sequence ID" value="NC_004757.1"/>
</dbReference>
<dbReference type="SMR" id="Q82XY7"/>
<dbReference type="STRING" id="228410.NE0104"/>
<dbReference type="GeneID" id="87103318"/>
<dbReference type="KEGG" id="neu:NE0104"/>
<dbReference type="eggNOG" id="COG0129">
    <property type="taxonomic scope" value="Bacteria"/>
</dbReference>
<dbReference type="HOGENOM" id="CLU_014271_4_1_4"/>
<dbReference type="OrthoDB" id="9807077at2"/>
<dbReference type="PhylomeDB" id="Q82XY7"/>
<dbReference type="UniPathway" id="UPA00047">
    <property type="reaction ID" value="UER00057"/>
</dbReference>
<dbReference type="UniPathway" id="UPA00049">
    <property type="reaction ID" value="UER00061"/>
</dbReference>
<dbReference type="Proteomes" id="UP000001416">
    <property type="component" value="Chromosome"/>
</dbReference>
<dbReference type="GO" id="GO:0051537">
    <property type="term" value="F:2 iron, 2 sulfur cluster binding"/>
    <property type="evidence" value="ECO:0007669"/>
    <property type="project" value="UniProtKB-UniRule"/>
</dbReference>
<dbReference type="GO" id="GO:0004160">
    <property type="term" value="F:dihydroxy-acid dehydratase activity"/>
    <property type="evidence" value="ECO:0007669"/>
    <property type="project" value="UniProtKB-UniRule"/>
</dbReference>
<dbReference type="GO" id="GO:0000287">
    <property type="term" value="F:magnesium ion binding"/>
    <property type="evidence" value="ECO:0007669"/>
    <property type="project" value="UniProtKB-UniRule"/>
</dbReference>
<dbReference type="GO" id="GO:0009097">
    <property type="term" value="P:isoleucine biosynthetic process"/>
    <property type="evidence" value="ECO:0007669"/>
    <property type="project" value="UniProtKB-UniRule"/>
</dbReference>
<dbReference type="GO" id="GO:0009099">
    <property type="term" value="P:L-valine biosynthetic process"/>
    <property type="evidence" value="ECO:0007669"/>
    <property type="project" value="UniProtKB-UniRule"/>
</dbReference>
<dbReference type="FunFam" id="3.50.30.80:FF:000001">
    <property type="entry name" value="Dihydroxy-acid dehydratase"/>
    <property type="match status" value="1"/>
</dbReference>
<dbReference type="Gene3D" id="3.50.30.80">
    <property type="entry name" value="IlvD/EDD C-terminal domain-like"/>
    <property type="match status" value="1"/>
</dbReference>
<dbReference type="HAMAP" id="MF_00012">
    <property type="entry name" value="IlvD"/>
    <property type="match status" value="1"/>
</dbReference>
<dbReference type="InterPro" id="IPR050165">
    <property type="entry name" value="DHAD_IlvD/Edd"/>
</dbReference>
<dbReference type="InterPro" id="IPR042096">
    <property type="entry name" value="Dihydro-acid_dehy_C"/>
</dbReference>
<dbReference type="InterPro" id="IPR004404">
    <property type="entry name" value="DihydroxyA_deHydtase"/>
</dbReference>
<dbReference type="InterPro" id="IPR020558">
    <property type="entry name" value="DiOHA_6PGluconate_deHydtase_CS"/>
</dbReference>
<dbReference type="InterPro" id="IPR056740">
    <property type="entry name" value="ILV_EDD_C"/>
</dbReference>
<dbReference type="InterPro" id="IPR000581">
    <property type="entry name" value="ILV_EDD_N"/>
</dbReference>
<dbReference type="InterPro" id="IPR037237">
    <property type="entry name" value="IlvD/EDD_N"/>
</dbReference>
<dbReference type="NCBIfam" id="TIGR00110">
    <property type="entry name" value="ilvD"/>
    <property type="match status" value="1"/>
</dbReference>
<dbReference type="NCBIfam" id="NF002068">
    <property type="entry name" value="PRK00911.1"/>
    <property type="match status" value="1"/>
</dbReference>
<dbReference type="PANTHER" id="PTHR21000">
    <property type="entry name" value="DIHYDROXY-ACID DEHYDRATASE DAD"/>
    <property type="match status" value="1"/>
</dbReference>
<dbReference type="PANTHER" id="PTHR21000:SF5">
    <property type="entry name" value="DIHYDROXY-ACID DEHYDRATASE, MITOCHONDRIAL"/>
    <property type="match status" value="1"/>
</dbReference>
<dbReference type="Pfam" id="PF24877">
    <property type="entry name" value="ILV_EDD_C"/>
    <property type="match status" value="1"/>
</dbReference>
<dbReference type="Pfam" id="PF00920">
    <property type="entry name" value="ILVD_EDD_N"/>
    <property type="match status" value="1"/>
</dbReference>
<dbReference type="SUPFAM" id="SSF143975">
    <property type="entry name" value="IlvD/EDD N-terminal domain-like"/>
    <property type="match status" value="1"/>
</dbReference>
<dbReference type="SUPFAM" id="SSF52016">
    <property type="entry name" value="LeuD/IlvD-like"/>
    <property type="match status" value="1"/>
</dbReference>
<dbReference type="PROSITE" id="PS00886">
    <property type="entry name" value="ILVD_EDD_1"/>
    <property type="match status" value="1"/>
</dbReference>
<dbReference type="PROSITE" id="PS00887">
    <property type="entry name" value="ILVD_EDD_2"/>
    <property type="match status" value="1"/>
</dbReference>
<feature type="chain" id="PRO_0000103485" description="Dihydroxy-acid dehydratase">
    <location>
        <begin position="1"/>
        <end position="557"/>
    </location>
</feature>
<feature type="active site" description="Proton acceptor" evidence="1">
    <location>
        <position position="473"/>
    </location>
</feature>
<feature type="binding site" evidence="1">
    <location>
        <position position="50"/>
    </location>
    <ligand>
        <name>[2Fe-2S] cluster</name>
        <dbReference type="ChEBI" id="CHEBI:190135"/>
    </ligand>
</feature>
<feature type="binding site" evidence="1">
    <location>
        <position position="82"/>
    </location>
    <ligand>
        <name>Mg(2+)</name>
        <dbReference type="ChEBI" id="CHEBI:18420"/>
    </ligand>
</feature>
<feature type="binding site" evidence="1">
    <location>
        <position position="123"/>
    </location>
    <ligand>
        <name>[2Fe-2S] cluster</name>
        <dbReference type="ChEBI" id="CHEBI:190135"/>
    </ligand>
</feature>
<feature type="binding site" evidence="1">
    <location>
        <position position="124"/>
    </location>
    <ligand>
        <name>Mg(2+)</name>
        <dbReference type="ChEBI" id="CHEBI:18420"/>
    </ligand>
</feature>
<feature type="binding site" description="via carbamate group" evidence="1">
    <location>
        <position position="125"/>
    </location>
    <ligand>
        <name>Mg(2+)</name>
        <dbReference type="ChEBI" id="CHEBI:18420"/>
    </ligand>
</feature>
<feature type="binding site" evidence="1">
    <location>
        <position position="195"/>
    </location>
    <ligand>
        <name>[2Fe-2S] cluster</name>
        <dbReference type="ChEBI" id="CHEBI:190135"/>
    </ligand>
</feature>
<feature type="binding site" evidence="1">
    <location>
        <position position="447"/>
    </location>
    <ligand>
        <name>Mg(2+)</name>
        <dbReference type="ChEBI" id="CHEBI:18420"/>
    </ligand>
</feature>
<feature type="modified residue" description="N6-carboxylysine" evidence="1">
    <location>
        <position position="125"/>
    </location>
</feature>